<organism>
    <name type="scientific">Coxiella burnetii (strain RSA 493 / Nine Mile phase I)</name>
    <dbReference type="NCBI Taxonomy" id="227377"/>
    <lineage>
        <taxon>Bacteria</taxon>
        <taxon>Pseudomonadati</taxon>
        <taxon>Pseudomonadota</taxon>
        <taxon>Gammaproteobacteria</taxon>
        <taxon>Legionellales</taxon>
        <taxon>Coxiellaceae</taxon>
        <taxon>Coxiella</taxon>
    </lineage>
</organism>
<proteinExistence type="inferred from homology"/>
<keyword id="KW-0030">Aminoacyl-tRNA synthetase</keyword>
<keyword id="KW-0067">ATP-binding</keyword>
<keyword id="KW-0963">Cytoplasm</keyword>
<keyword id="KW-0436">Ligase</keyword>
<keyword id="KW-0460">Magnesium</keyword>
<keyword id="KW-0479">Metal-binding</keyword>
<keyword id="KW-0547">Nucleotide-binding</keyword>
<keyword id="KW-0648">Protein biosynthesis</keyword>
<keyword id="KW-1185">Reference proteome</keyword>
<evidence type="ECO:0000255" key="1">
    <source>
        <dbReference type="HAMAP-Rule" id="MF_00252"/>
    </source>
</evidence>
<gene>
    <name evidence="1" type="primary">lysS</name>
    <name type="ordered locus">CBU_0430</name>
</gene>
<reference key="1">
    <citation type="journal article" date="2003" name="Proc. Natl. Acad. Sci. U.S.A.">
        <title>Complete genome sequence of the Q-fever pathogen, Coxiella burnetii.</title>
        <authorList>
            <person name="Seshadri R."/>
            <person name="Paulsen I.T."/>
            <person name="Eisen J.A."/>
            <person name="Read T.D."/>
            <person name="Nelson K.E."/>
            <person name="Nelson W.C."/>
            <person name="Ward N.L."/>
            <person name="Tettelin H."/>
            <person name="Davidsen T.M."/>
            <person name="Beanan M.J."/>
            <person name="DeBoy R.T."/>
            <person name="Daugherty S.C."/>
            <person name="Brinkac L.M."/>
            <person name="Madupu R."/>
            <person name="Dodson R.J."/>
            <person name="Khouri H.M."/>
            <person name="Lee K.H."/>
            <person name="Carty H.A."/>
            <person name="Scanlan D."/>
            <person name="Heinzen R.A."/>
            <person name="Thompson H.A."/>
            <person name="Samuel J.E."/>
            <person name="Fraser C.M."/>
            <person name="Heidelberg J.F."/>
        </authorList>
    </citation>
    <scope>NUCLEOTIDE SEQUENCE [LARGE SCALE GENOMIC DNA]</scope>
    <source>
        <strain>RSA 493 / Nine Mile phase I</strain>
    </source>
</reference>
<protein>
    <recommendedName>
        <fullName evidence="1">Lysine--tRNA ligase</fullName>
        <ecNumber evidence="1">6.1.1.6</ecNumber>
    </recommendedName>
    <alternativeName>
        <fullName evidence="1">Lysyl-tRNA synthetase</fullName>
        <shortName evidence="1">LysRS</shortName>
    </alternativeName>
</protein>
<sequence length="498" mass="57739">MELKDQIKEENEQIAQRKLKLKKRREEGQAYPNDFKRDSLAADLHAVYDQFDSGALTAKAIRVKMAGRMMTRRIMGKASFAHIQDMKGRMQIYVTRDSLPQGVYSDFKSWDLGDIVGIEGELFKTKTEELSVKVDQIRLLTKALRPMPDKFHGLHDQEQRFRQRYLDLIVNESSRHLFQTRSQVIAQIRRFLDDRGYIEVETPMMHPLPGGAAARPFETHHNAMNMDLFLRIAPELYLKRLVVGGFEKVYEINRNFRNEGISTRHNPEFTMLEFYQAYATYEDMMMLTESMIRHLAEKIFGVMEIKYQGVRIDLNKPFPRLSLRDAILQFNPGITPDQIDHLETARELAHKYEIATPAHYGLGKIQTELFEKLVEEKLQQPIFITHFPKEVSPLSRANEENDFITDRFEFYVGGREIANGFSELNDPEDQAARFREQLKARNAGDLEAMSFDEDYITALEYGLPPTAGEGIGIDRLVMLFTDNASIRDVILFPLLRSK</sequence>
<accession>Q83E97</accession>
<name>SYK_COXBU</name>
<feature type="chain" id="PRO_0000152620" description="Lysine--tRNA ligase">
    <location>
        <begin position="1"/>
        <end position="498"/>
    </location>
</feature>
<feature type="binding site" evidence="1">
    <location>
        <position position="409"/>
    </location>
    <ligand>
        <name>Mg(2+)</name>
        <dbReference type="ChEBI" id="CHEBI:18420"/>
        <label>1</label>
    </ligand>
</feature>
<feature type="binding site" evidence="1">
    <location>
        <position position="416"/>
    </location>
    <ligand>
        <name>Mg(2+)</name>
        <dbReference type="ChEBI" id="CHEBI:18420"/>
        <label>1</label>
    </ligand>
</feature>
<feature type="binding site" evidence="1">
    <location>
        <position position="416"/>
    </location>
    <ligand>
        <name>Mg(2+)</name>
        <dbReference type="ChEBI" id="CHEBI:18420"/>
        <label>2</label>
    </ligand>
</feature>
<comment type="catalytic activity">
    <reaction evidence="1">
        <text>tRNA(Lys) + L-lysine + ATP = L-lysyl-tRNA(Lys) + AMP + diphosphate</text>
        <dbReference type="Rhea" id="RHEA:20792"/>
        <dbReference type="Rhea" id="RHEA-COMP:9696"/>
        <dbReference type="Rhea" id="RHEA-COMP:9697"/>
        <dbReference type="ChEBI" id="CHEBI:30616"/>
        <dbReference type="ChEBI" id="CHEBI:32551"/>
        <dbReference type="ChEBI" id="CHEBI:33019"/>
        <dbReference type="ChEBI" id="CHEBI:78442"/>
        <dbReference type="ChEBI" id="CHEBI:78529"/>
        <dbReference type="ChEBI" id="CHEBI:456215"/>
        <dbReference type="EC" id="6.1.1.6"/>
    </reaction>
</comment>
<comment type="cofactor">
    <cofactor evidence="1">
        <name>Mg(2+)</name>
        <dbReference type="ChEBI" id="CHEBI:18420"/>
    </cofactor>
    <text evidence="1">Binds 3 Mg(2+) ions per subunit.</text>
</comment>
<comment type="subunit">
    <text evidence="1">Homodimer.</text>
</comment>
<comment type="subcellular location">
    <subcellularLocation>
        <location evidence="1">Cytoplasm</location>
    </subcellularLocation>
</comment>
<comment type="similarity">
    <text evidence="1">Belongs to the class-II aminoacyl-tRNA synthetase family.</text>
</comment>
<dbReference type="EC" id="6.1.1.6" evidence="1"/>
<dbReference type="EMBL" id="AE016828">
    <property type="protein sequence ID" value="AAO89981.1"/>
    <property type="molecule type" value="Genomic_DNA"/>
</dbReference>
<dbReference type="RefSeq" id="NP_819467.1">
    <property type="nucleotide sequence ID" value="NC_002971.4"/>
</dbReference>
<dbReference type="RefSeq" id="WP_005771651.1">
    <property type="nucleotide sequence ID" value="NZ_CCYB01000054.1"/>
</dbReference>
<dbReference type="SMR" id="Q83E97"/>
<dbReference type="STRING" id="227377.CBU_0430"/>
<dbReference type="DNASU" id="1208314"/>
<dbReference type="EnsemblBacteria" id="AAO89981">
    <property type="protein sequence ID" value="AAO89981"/>
    <property type="gene ID" value="CBU_0430"/>
</dbReference>
<dbReference type="GeneID" id="1208314"/>
<dbReference type="KEGG" id="cbu:CBU_0430"/>
<dbReference type="PATRIC" id="fig|227377.7.peg.419"/>
<dbReference type="eggNOG" id="COG1190">
    <property type="taxonomic scope" value="Bacteria"/>
</dbReference>
<dbReference type="HOGENOM" id="CLU_008255_6_0_6"/>
<dbReference type="OrthoDB" id="9802326at2"/>
<dbReference type="Proteomes" id="UP000002671">
    <property type="component" value="Chromosome"/>
</dbReference>
<dbReference type="GO" id="GO:0005737">
    <property type="term" value="C:cytoplasm"/>
    <property type="evidence" value="ECO:0000318"/>
    <property type="project" value="GO_Central"/>
</dbReference>
<dbReference type="GO" id="GO:0005829">
    <property type="term" value="C:cytosol"/>
    <property type="evidence" value="ECO:0000318"/>
    <property type="project" value="GO_Central"/>
</dbReference>
<dbReference type="GO" id="GO:0005524">
    <property type="term" value="F:ATP binding"/>
    <property type="evidence" value="ECO:0007669"/>
    <property type="project" value="UniProtKB-UniRule"/>
</dbReference>
<dbReference type="GO" id="GO:0004824">
    <property type="term" value="F:lysine-tRNA ligase activity"/>
    <property type="evidence" value="ECO:0000318"/>
    <property type="project" value="GO_Central"/>
</dbReference>
<dbReference type="GO" id="GO:0000287">
    <property type="term" value="F:magnesium ion binding"/>
    <property type="evidence" value="ECO:0007669"/>
    <property type="project" value="UniProtKB-UniRule"/>
</dbReference>
<dbReference type="GO" id="GO:0000049">
    <property type="term" value="F:tRNA binding"/>
    <property type="evidence" value="ECO:0000318"/>
    <property type="project" value="GO_Central"/>
</dbReference>
<dbReference type="GO" id="GO:0006430">
    <property type="term" value="P:lysyl-tRNA aminoacylation"/>
    <property type="evidence" value="ECO:0000318"/>
    <property type="project" value="GO_Central"/>
</dbReference>
<dbReference type="CDD" id="cd00775">
    <property type="entry name" value="LysRS_core"/>
    <property type="match status" value="1"/>
</dbReference>
<dbReference type="CDD" id="cd04322">
    <property type="entry name" value="LysRS_N"/>
    <property type="match status" value="1"/>
</dbReference>
<dbReference type="FunFam" id="2.40.50.140:FF:000024">
    <property type="entry name" value="Lysine--tRNA ligase"/>
    <property type="match status" value="1"/>
</dbReference>
<dbReference type="FunFam" id="3.30.930.10:FF:000001">
    <property type="entry name" value="Lysine--tRNA ligase"/>
    <property type="match status" value="1"/>
</dbReference>
<dbReference type="Gene3D" id="3.30.930.10">
    <property type="entry name" value="Bira Bifunctional Protein, Domain 2"/>
    <property type="match status" value="1"/>
</dbReference>
<dbReference type="Gene3D" id="2.40.50.140">
    <property type="entry name" value="Nucleic acid-binding proteins"/>
    <property type="match status" value="1"/>
</dbReference>
<dbReference type="HAMAP" id="MF_00252">
    <property type="entry name" value="Lys_tRNA_synth_class2"/>
    <property type="match status" value="1"/>
</dbReference>
<dbReference type="InterPro" id="IPR004364">
    <property type="entry name" value="Aa-tRNA-synt_II"/>
</dbReference>
<dbReference type="InterPro" id="IPR006195">
    <property type="entry name" value="aa-tRNA-synth_II"/>
</dbReference>
<dbReference type="InterPro" id="IPR045864">
    <property type="entry name" value="aa-tRNA-synth_II/BPL/LPL"/>
</dbReference>
<dbReference type="InterPro" id="IPR002313">
    <property type="entry name" value="Lys-tRNA-ligase_II"/>
</dbReference>
<dbReference type="InterPro" id="IPR044136">
    <property type="entry name" value="Lys-tRNA-ligase_II_N"/>
</dbReference>
<dbReference type="InterPro" id="IPR018149">
    <property type="entry name" value="Lys-tRNA-synth_II_C"/>
</dbReference>
<dbReference type="InterPro" id="IPR012340">
    <property type="entry name" value="NA-bd_OB-fold"/>
</dbReference>
<dbReference type="InterPro" id="IPR004365">
    <property type="entry name" value="NA-bd_OB_tRNA"/>
</dbReference>
<dbReference type="NCBIfam" id="TIGR00499">
    <property type="entry name" value="lysS_bact"/>
    <property type="match status" value="1"/>
</dbReference>
<dbReference type="NCBIfam" id="NF001756">
    <property type="entry name" value="PRK00484.1"/>
    <property type="match status" value="1"/>
</dbReference>
<dbReference type="PANTHER" id="PTHR42918:SF15">
    <property type="entry name" value="LYSINE--TRNA LIGASE, CHLOROPLASTIC_MITOCHONDRIAL"/>
    <property type="match status" value="1"/>
</dbReference>
<dbReference type="PANTHER" id="PTHR42918">
    <property type="entry name" value="LYSYL-TRNA SYNTHETASE"/>
    <property type="match status" value="1"/>
</dbReference>
<dbReference type="Pfam" id="PF00152">
    <property type="entry name" value="tRNA-synt_2"/>
    <property type="match status" value="1"/>
</dbReference>
<dbReference type="Pfam" id="PF01336">
    <property type="entry name" value="tRNA_anti-codon"/>
    <property type="match status" value="1"/>
</dbReference>
<dbReference type="PRINTS" id="PR00982">
    <property type="entry name" value="TRNASYNTHLYS"/>
</dbReference>
<dbReference type="SUPFAM" id="SSF55681">
    <property type="entry name" value="Class II aaRS and biotin synthetases"/>
    <property type="match status" value="1"/>
</dbReference>
<dbReference type="SUPFAM" id="SSF50249">
    <property type="entry name" value="Nucleic acid-binding proteins"/>
    <property type="match status" value="1"/>
</dbReference>
<dbReference type="PROSITE" id="PS50862">
    <property type="entry name" value="AA_TRNA_LIGASE_II"/>
    <property type="match status" value="1"/>
</dbReference>